<sequence>MKLRHLEIFYTVMTCGSLSRAAESLNISQPAASKSLKNAELKLGFKLFQRVRGKLLPSREALELFEKAQGIYQDLSNLRLLADNLARDPRAKFTLGCLPCLGLSLVPEIATDFYQQNSNLVMTLTAEHTETLVKKLDLREIDLALTMQPVQQGDIMATLIAEVPLVYVDKDYRQGAVEIDSIDQQRWISPGLDSLSTAIAAHRVFPATGLNVETCYMAMEFVKRGVGCCITDIFSARHSLTPEMIHQISPPMKIDLYLLRRADASLSPVTQKFVDFLCKRLRNELREINLELYPGNKKSIVSPV</sequence>
<accession>P0DV33</accession>
<evidence type="ECO:0000255" key="1">
    <source>
        <dbReference type="PROSITE-ProRule" id="PRU00253"/>
    </source>
</evidence>
<evidence type="ECO:0000269" key="2">
    <source>
    </source>
</evidence>
<evidence type="ECO:0000269" key="3">
    <source>
    </source>
</evidence>
<evidence type="ECO:0000303" key="4">
    <source>
    </source>
</evidence>
<evidence type="ECO:0000305" key="5"/>
<evidence type="ECO:0000312" key="6">
    <source>
        <dbReference type="EMBL" id="KYQ97099.1"/>
    </source>
</evidence>
<evidence type="ECO:0007829" key="7">
    <source>
        <dbReference type="PDB" id="7QEJ"/>
    </source>
</evidence>
<protein>
    <recommendedName>
        <fullName evidence="5">HTH-type transcriptional regulator AdmX</fullName>
    </recommendedName>
</protein>
<comment type="function">
    <text evidence="2 3">Positively regulates the biosynthesis of andrimid, a broad-spectrum antibiotic, by activating the expression of the adm biosynthetic gene cluster (PubMed:26914969, PubMed:30500953). It specifically binds to a region within the adm promoter (PubMed:30500953).</text>
</comment>
<comment type="activity regulation">
    <text evidence="3">AdmX-mediated transcription is inhibited by indole-3-acetic and indole-3-pyruvic acids (PubMed:30500953). AdmX recognizes and binds the auxin indole-3-acetic acid (IAA), which causes conformational changes in AdmX that result in the inhibition of the expression of the andrimid gene cluster and the suppression of antibiotic production (PubMed:30500953). It also recognizes indole-3-pyruvic acid (IPA), an intermediate of the main IAA biosynthetic pathway in plants and plant beneficial bacteria, which also prevents andrimid synthesis, but to a much lesser extent (PubMed:30500953).</text>
</comment>
<comment type="subcellular location">
    <subcellularLocation>
        <location evidence="5">Cytoplasm</location>
    </subcellularLocation>
</comment>
<comment type="induction">
    <text evidence="2">Expressed in late logarithmic phase of growth.</text>
</comment>
<comment type="disruption phenotype">
    <text evidence="2">Deletion mutant does not inhibit growth of B.subtilis and shows decreased adm transcript levels.</text>
</comment>
<comment type="similarity">
    <text evidence="5">Belongs to the LysR transcriptional regulatory family.</text>
</comment>
<reference key="1">
    <citation type="journal article" date="2016" name="Genome Announc.">
        <title>Genome sequence of Serratia plymuthica A153, a model rhizobacterium for the investigation of the synthesis and regulation of haterumalides, zeamine, and andrimid.</title>
        <authorList>
            <person name="Matilla M.A."/>
            <person name="Drew A."/>
            <person name="Udaondo Z."/>
            <person name="Krell T."/>
            <person name="Salmond G.P."/>
        </authorList>
    </citation>
    <scope>NUCLEOTIDE SEQUENCE [LARGE SCALE GENOMIC DNA]</scope>
    <source>
        <strain>A153</strain>
    </source>
</reference>
<reference key="2">
    <citation type="journal article" date="2016" name="Environ. Microbiol.">
        <title>Biosynthesis of the acetyl-CoA carboxylase-inhibiting antibiotic, andrimid in Serratia is regulated by Hfq and the LysR-type transcriptional regulator, AdmX.</title>
        <authorList>
            <person name="Matilla M.A."/>
            <person name="Nogellova V."/>
            <person name="Morel B."/>
            <person name="Krell T."/>
            <person name="Salmond G.P."/>
        </authorList>
    </citation>
    <scope>FUNCTION</scope>
    <scope>INDUCTION</scope>
    <scope>DISRUPTION PHENOTYPE</scope>
    <source>
        <strain>A153</strain>
    </source>
</reference>
<reference key="3">
    <citation type="journal article" date="2018" name="Nucleic Acids Res.">
        <title>An auxin controls bacterial antibiotics production.</title>
        <authorList>
            <person name="Matilla M.A."/>
            <person name="Daddaoua A."/>
            <person name="Chini A."/>
            <person name="Morel B."/>
            <person name="Krell T."/>
        </authorList>
    </citation>
    <scope>FUNCTION</scope>
    <scope>DNA-BINDING</scope>
    <scope>ACTIVITY REGULATION</scope>
    <source>
        <strain>A153</strain>
    </source>
</reference>
<dbReference type="EMBL" id="LRQU01000001">
    <property type="protein sequence ID" value="KYQ97099.1"/>
    <property type="molecule type" value="Genomic_DNA"/>
</dbReference>
<dbReference type="RefSeq" id="WP_062867893.1">
    <property type="nucleotide sequence ID" value="NZ_LRQU01000001.1"/>
</dbReference>
<dbReference type="PDB" id="7QEJ">
    <property type="method" value="X-ray"/>
    <property type="resolution" value="1.81 A"/>
    <property type="chains" value="A/B=69-295"/>
</dbReference>
<dbReference type="PDB" id="7QEK">
    <property type="method" value="X-ray"/>
    <property type="resolution" value="2.25 A"/>
    <property type="chains" value="A/B=69-295"/>
</dbReference>
<dbReference type="PDBsum" id="7QEJ"/>
<dbReference type="PDBsum" id="7QEK"/>
<dbReference type="SMR" id="P0DV33"/>
<dbReference type="GO" id="GO:0005737">
    <property type="term" value="C:cytoplasm"/>
    <property type="evidence" value="ECO:0007669"/>
    <property type="project" value="UniProtKB-SubCell"/>
</dbReference>
<dbReference type="GO" id="GO:0003700">
    <property type="term" value="F:DNA-binding transcription factor activity"/>
    <property type="evidence" value="ECO:0007669"/>
    <property type="project" value="InterPro"/>
</dbReference>
<dbReference type="GO" id="GO:0043565">
    <property type="term" value="F:sequence-specific DNA binding"/>
    <property type="evidence" value="ECO:0007669"/>
    <property type="project" value="TreeGrafter"/>
</dbReference>
<dbReference type="GO" id="GO:0010628">
    <property type="term" value="P:positive regulation of gene expression"/>
    <property type="evidence" value="ECO:0007669"/>
    <property type="project" value="TreeGrafter"/>
</dbReference>
<dbReference type="CDD" id="cd05466">
    <property type="entry name" value="PBP2_LTTR_substrate"/>
    <property type="match status" value="1"/>
</dbReference>
<dbReference type="Gene3D" id="3.40.190.290">
    <property type="match status" value="1"/>
</dbReference>
<dbReference type="Gene3D" id="1.10.10.10">
    <property type="entry name" value="Winged helix-like DNA-binding domain superfamily/Winged helix DNA-binding domain"/>
    <property type="match status" value="1"/>
</dbReference>
<dbReference type="InterPro" id="IPR005119">
    <property type="entry name" value="LysR_subst-bd"/>
</dbReference>
<dbReference type="InterPro" id="IPR000847">
    <property type="entry name" value="Tscrpt_reg_HTH_LysR"/>
</dbReference>
<dbReference type="InterPro" id="IPR036388">
    <property type="entry name" value="WH-like_DNA-bd_sf"/>
</dbReference>
<dbReference type="InterPro" id="IPR036390">
    <property type="entry name" value="WH_DNA-bd_sf"/>
</dbReference>
<dbReference type="PANTHER" id="PTHR30427">
    <property type="entry name" value="TRANSCRIPTIONAL ACTIVATOR PROTEIN LYSR"/>
    <property type="match status" value="1"/>
</dbReference>
<dbReference type="PANTHER" id="PTHR30427:SF1">
    <property type="entry name" value="TRANSCRIPTIONAL ACTIVATOR PROTEIN LYSR"/>
    <property type="match status" value="1"/>
</dbReference>
<dbReference type="Pfam" id="PF00126">
    <property type="entry name" value="HTH_1"/>
    <property type="match status" value="1"/>
</dbReference>
<dbReference type="Pfam" id="PF03466">
    <property type="entry name" value="LysR_substrate"/>
    <property type="match status" value="1"/>
</dbReference>
<dbReference type="PRINTS" id="PR00039">
    <property type="entry name" value="HTHLYSR"/>
</dbReference>
<dbReference type="SUPFAM" id="SSF53850">
    <property type="entry name" value="Periplasmic binding protein-like II"/>
    <property type="match status" value="1"/>
</dbReference>
<dbReference type="SUPFAM" id="SSF46785">
    <property type="entry name" value="Winged helix' DNA-binding domain"/>
    <property type="match status" value="1"/>
</dbReference>
<dbReference type="PROSITE" id="PS50931">
    <property type="entry name" value="HTH_LYSR"/>
    <property type="match status" value="1"/>
</dbReference>
<feature type="chain" id="PRO_0000454763" description="HTH-type transcriptional regulator AdmX">
    <location>
        <begin position="1"/>
        <end position="304"/>
    </location>
</feature>
<feature type="domain" description="HTH lysR-type" evidence="1">
    <location>
        <begin position="1"/>
        <end position="58"/>
    </location>
</feature>
<feature type="DNA-binding region" description="H-T-H motif" evidence="1">
    <location>
        <begin position="18"/>
        <end position="37"/>
    </location>
</feature>
<feature type="strand" evidence="7">
    <location>
        <begin position="92"/>
        <end position="97"/>
    </location>
</feature>
<feature type="helix" evidence="7">
    <location>
        <begin position="99"/>
        <end position="102"/>
    </location>
</feature>
<feature type="helix" evidence="7">
    <location>
        <begin position="105"/>
        <end position="116"/>
    </location>
</feature>
<feature type="strand" evidence="7">
    <location>
        <begin position="121"/>
        <end position="126"/>
    </location>
</feature>
<feature type="helix" evidence="7">
    <location>
        <begin position="129"/>
        <end position="137"/>
    </location>
</feature>
<feature type="strand" evidence="7">
    <location>
        <begin position="142"/>
        <end position="148"/>
    </location>
</feature>
<feature type="strand" evidence="7">
    <location>
        <begin position="155"/>
        <end position="168"/>
    </location>
</feature>
<feature type="helix" evidence="7">
    <location>
        <begin position="179"/>
        <end position="181"/>
    </location>
</feature>
<feature type="turn" evidence="7">
    <location>
        <begin position="184"/>
        <end position="186"/>
    </location>
</feature>
<feature type="helix" evidence="7">
    <location>
        <begin position="193"/>
        <end position="202"/>
    </location>
</feature>
<feature type="strand" evidence="7">
    <location>
        <begin position="209"/>
        <end position="212"/>
    </location>
</feature>
<feature type="helix" evidence="7">
    <location>
        <begin position="215"/>
        <end position="223"/>
    </location>
</feature>
<feature type="strand" evidence="7">
    <location>
        <begin position="228"/>
        <end position="232"/>
    </location>
</feature>
<feature type="helix" evidence="7">
    <location>
        <begin position="233"/>
        <end position="239"/>
    </location>
</feature>
<feature type="helix" evidence="7">
    <location>
        <begin position="242"/>
        <end position="244"/>
    </location>
</feature>
<feature type="strand" evidence="7">
    <location>
        <begin position="245"/>
        <end position="264"/>
    </location>
</feature>
<feature type="helix" evidence="7">
    <location>
        <begin position="268"/>
        <end position="292"/>
    </location>
</feature>
<organism>
    <name type="scientific">Serratia plymuthica</name>
    <dbReference type="NCBI Taxonomy" id="82996"/>
    <lineage>
        <taxon>Bacteria</taxon>
        <taxon>Pseudomonadati</taxon>
        <taxon>Pseudomonadota</taxon>
        <taxon>Gammaproteobacteria</taxon>
        <taxon>Enterobacterales</taxon>
        <taxon>Yersiniaceae</taxon>
        <taxon>Serratia</taxon>
    </lineage>
</organism>
<gene>
    <name evidence="4" type="primary">admX</name>
    <name evidence="6" type="ORF">AWY96_00730</name>
</gene>
<name>ADMX_SERPL</name>
<keyword id="KW-0002">3D-structure</keyword>
<keyword id="KW-0010">Activator</keyword>
<keyword id="KW-0963">Cytoplasm</keyword>
<keyword id="KW-0238">DNA-binding</keyword>
<keyword id="KW-0804">Transcription</keyword>
<keyword id="KW-0805">Transcription regulation</keyword>
<proteinExistence type="evidence at protein level"/>